<gene>
    <name evidence="1" type="primary">dapA</name>
    <name type="ordered locus">Rfer_2097</name>
</gene>
<feature type="chain" id="PRO_0000340983" description="4-hydroxy-tetrahydrodipicolinate synthase">
    <location>
        <begin position="1"/>
        <end position="297"/>
    </location>
</feature>
<feature type="active site" description="Proton donor/acceptor" evidence="1">
    <location>
        <position position="139"/>
    </location>
</feature>
<feature type="active site" description="Schiff-base intermediate with substrate" evidence="1">
    <location>
        <position position="167"/>
    </location>
</feature>
<feature type="binding site" evidence="1">
    <location>
        <position position="51"/>
    </location>
    <ligand>
        <name>pyruvate</name>
        <dbReference type="ChEBI" id="CHEBI:15361"/>
    </ligand>
</feature>
<feature type="binding site" evidence="1">
    <location>
        <position position="209"/>
    </location>
    <ligand>
        <name>pyruvate</name>
        <dbReference type="ChEBI" id="CHEBI:15361"/>
    </ligand>
</feature>
<feature type="site" description="Part of a proton relay during catalysis" evidence="1">
    <location>
        <position position="50"/>
    </location>
</feature>
<feature type="site" description="Part of a proton relay during catalysis" evidence="1">
    <location>
        <position position="113"/>
    </location>
</feature>
<name>DAPA_ALBFT</name>
<sequence>MTSSTSQITGSIVALVTPMLDDGSVDYPALRKLIDWHIAEGTDCIGVVGTTGESPTVNVQEHCEIIRVAVEQAAGRVPIMAGCGANCTAEAIELTQFAKKVGADCQLQVVPYYNKPTQEGQYRHFKAIAEAVDLPMVLYNVPGRAVADMAHDTVLRLAQVPGIVGIKEATGQIDRAQWLIREAPKGFAIYSGDDPTAVALMLCGGHGNVSVTANIAPRLMHELCVAAMAGDTKRAMEIQFKLLPLHKNLFIEANPIPVKWAVARLKLCGGTLRLPMTPLTPANEAALESALHASGLL</sequence>
<keyword id="KW-0028">Amino-acid biosynthesis</keyword>
<keyword id="KW-0963">Cytoplasm</keyword>
<keyword id="KW-0220">Diaminopimelate biosynthesis</keyword>
<keyword id="KW-0456">Lyase</keyword>
<keyword id="KW-0457">Lysine biosynthesis</keyword>
<keyword id="KW-1185">Reference proteome</keyword>
<keyword id="KW-0704">Schiff base</keyword>
<protein>
    <recommendedName>
        <fullName evidence="1">4-hydroxy-tetrahydrodipicolinate synthase</fullName>
        <shortName evidence="1">HTPA synthase</shortName>
        <ecNumber evidence="1">4.3.3.7</ecNumber>
    </recommendedName>
</protein>
<evidence type="ECO:0000255" key="1">
    <source>
        <dbReference type="HAMAP-Rule" id="MF_00418"/>
    </source>
</evidence>
<evidence type="ECO:0000305" key="2"/>
<accession>Q21WN2</accession>
<dbReference type="EC" id="4.3.3.7" evidence="1"/>
<dbReference type="EMBL" id="CP000267">
    <property type="protein sequence ID" value="ABD69821.1"/>
    <property type="molecule type" value="Genomic_DNA"/>
</dbReference>
<dbReference type="RefSeq" id="WP_011464389.1">
    <property type="nucleotide sequence ID" value="NC_007908.1"/>
</dbReference>
<dbReference type="SMR" id="Q21WN2"/>
<dbReference type="STRING" id="338969.Rfer_2097"/>
<dbReference type="KEGG" id="rfr:Rfer_2097"/>
<dbReference type="eggNOG" id="COG0329">
    <property type="taxonomic scope" value="Bacteria"/>
</dbReference>
<dbReference type="HOGENOM" id="CLU_049343_7_1_4"/>
<dbReference type="OrthoDB" id="9782828at2"/>
<dbReference type="UniPathway" id="UPA00034">
    <property type="reaction ID" value="UER00017"/>
</dbReference>
<dbReference type="Proteomes" id="UP000008332">
    <property type="component" value="Chromosome"/>
</dbReference>
<dbReference type="GO" id="GO:0005829">
    <property type="term" value="C:cytosol"/>
    <property type="evidence" value="ECO:0007669"/>
    <property type="project" value="TreeGrafter"/>
</dbReference>
<dbReference type="GO" id="GO:0008840">
    <property type="term" value="F:4-hydroxy-tetrahydrodipicolinate synthase activity"/>
    <property type="evidence" value="ECO:0007669"/>
    <property type="project" value="UniProtKB-UniRule"/>
</dbReference>
<dbReference type="GO" id="GO:0019877">
    <property type="term" value="P:diaminopimelate biosynthetic process"/>
    <property type="evidence" value="ECO:0007669"/>
    <property type="project" value="UniProtKB-UniRule"/>
</dbReference>
<dbReference type="GO" id="GO:0009089">
    <property type="term" value="P:lysine biosynthetic process via diaminopimelate"/>
    <property type="evidence" value="ECO:0007669"/>
    <property type="project" value="UniProtKB-UniRule"/>
</dbReference>
<dbReference type="CDD" id="cd00950">
    <property type="entry name" value="DHDPS"/>
    <property type="match status" value="1"/>
</dbReference>
<dbReference type="Gene3D" id="3.20.20.70">
    <property type="entry name" value="Aldolase class I"/>
    <property type="match status" value="1"/>
</dbReference>
<dbReference type="HAMAP" id="MF_00418">
    <property type="entry name" value="DapA"/>
    <property type="match status" value="1"/>
</dbReference>
<dbReference type="InterPro" id="IPR013785">
    <property type="entry name" value="Aldolase_TIM"/>
</dbReference>
<dbReference type="InterPro" id="IPR005263">
    <property type="entry name" value="DapA"/>
</dbReference>
<dbReference type="InterPro" id="IPR002220">
    <property type="entry name" value="DapA-like"/>
</dbReference>
<dbReference type="InterPro" id="IPR020625">
    <property type="entry name" value="Schiff_base-form_aldolases_AS"/>
</dbReference>
<dbReference type="NCBIfam" id="TIGR00674">
    <property type="entry name" value="dapA"/>
    <property type="match status" value="1"/>
</dbReference>
<dbReference type="PANTHER" id="PTHR12128:SF66">
    <property type="entry name" value="4-HYDROXY-2-OXOGLUTARATE ALDOLASE, MITOCHONDRIAL"/>
    <property type="match status" value="1"/>
</dbReference>
<dbReference type="PANTHER" id="PTHR12128">
    <property type="entry name" value="DIHYDRODIPICOLINATE SYNTHASE"/>
    <property type="match status" value="1"/>
</dbReference>
<dbReference type="Pfam" id="PF00701">
    <property type="entry name" value="DHDPS"/>
    <property type="match status" value="1"/>
</dbReference>
<dbReference type="PIRSF" id="PIRSF001365">
    <property type="entry name" value="DHDPS"/>
    <property type="match status" value="1"/>
</dbReference>
<dbReference type="PRINTS" id="PR00146">
    <property type="entry name" value="DHPICSNTHASE"/>
</dbReference>
<dbReference type="SMART" id="SM01130">
    <property type="entry name" value="DHDPS"/>
    <property type="match status" value="1"/>
</dbReference>
<dbReference type="SUPFAM" id="SSF51569">
    <property type="entry name" value="Aldolase"/>
    <property type="match status" value="1"/>
</dbReference>
<dbReference type="PROSITE" id="PS00666">
    <property type="entry name" value="DHDPS_2"/>
    <property type="match status" value="1"/>
</dbReference>
<comment type="function">
    <text evidence="1">Catalyzes the condensation of (S)-aspartate-beta-semialdehyde [(S)-ASA] and pyruvate to 4-hydroxy-tetrahydrodipicolinate (HTPA).</text>
</comment>
<comment type="catalytic activity">
    <reaction evidence="1">
        <text>L-aspartate 4-semialdehyde + pyruvate = (2S,4S)-4-hydroxy-2,3,4,5-tetrahydrodipicolinate + H2O + H(+)</text>
        <dbReference type="Rhea" id="RHEA:34171"/>
        <dbReference type="ChEBI" id="CHEBI:15361"/>
        <dbReference type="ChEBI" id="CHEBI:15377"/>
        <dbReference type="ChEBI" id="CHEBI:15378"/>
        <dbReference type="ChEBI" id="CHEBI:67139"/>
        <dbReference type="ChEBI" id="CHEBI:537519"/>
        <dbReference type="EC" id="4.3.3.7"/>
    </reaction>
</comment>
<comment type="pathway">
    <text evidence="1">Amino-acid biosynthesis; L-lysine biosynthesis via DAP pathway; (S)-tetrahydrodipicolinate from L-aspartate: step 3/4.</text>
</comment>
<comment type="subunit">
    <text evidence="1">Homotetramer; dimer of dimers.</text>
</comment>
<comment type="subcellular location">
    <subcellularLocation>
        <location evidence="1">Cytoplasm</location>
    </subcellularLocation>
</comment>
<comment type="similarity">
    <text evidence="1">Belongs to the DapA family.</text>
</comment>
<comment type="caution">
    <text evidence="2">Was originally thought to be a dihydrodipicolinate synthase (DHDPS), catalyzing the condensation of (S)-aspartate-beta-semialdehyde [(S)-ASA] and pyruvate to dihydrodipicolinate (DHDP). However, it was shown in E.coli that the product of the enzymatic reaction is not dihydrodipicolinate but in fact (4S)-4-hydroxy-2,3,4,5-tetrahydro-(2S)-dipicolinic acid (HTPA), and that the consecutive dehydration reaction leading to DHDP is not spontaneous but catalyzed by DapB.</text>
</comment>
<reference key="1">
    <citation type="submission" date="2006-02" db="EMBL/GenBank/DDBJ databases">
        <title>Complete sequence of chromosome of Rhodoferax ferrireducens DSM 15236.</title>
        <authorList>
            <person name="Copeland A."/>
            <person name="Lucas S."/>
            <person name="Lapidus A."/>
            <person name="Barry K."/>
            <person name="Detter J.C."/>
            <person name="Glavina del Rio T."/>
            <person name="Hammon N."/>
            <person name="Israni S."/>
            <person name="Pitluck S."/>
            <person name="Brettin T."/>
            <person name="Bruce D."/>
            <person name="Han C."/>
            <person name="Tapia R."/>
            <person name="Gilna P."/>
            <person name="Kiss H."/>
            <person name="Schmutz J."/>
            <person name="Larimer F."/>
            <person name="Land M."/>
            <person name="Kyrpides N."/>
            <person name="Ivanova N."/>
            <person name="Richardson P."/>
        </authorList>
    </citation>
    <scope>NUCLEOTIDE SEQUENCE [LARGE SCALE GENOMIC DNA]</scope>
    <source>
        <strain>ATCC BAA-621 / DSM 15236 / T118</strain>
    </source>
</reference>
<organism>
    <name type="scientific">Albidiferax ferrireducens (strain ATCC BAA-621 / DSM 15236 / T118)</name>
    <name type="common">Rhodoferax ferrireducens</name>
    <dbReference type="NCBI Taxonomy" id="338969"/>
    <lineage>
        <taxon>Bacteria</taxon>
        <taxon>Pseudomonadati</taxon>
        <taxon>Pseudomonadota</taxon>
        <taxon>Betaproteobacteria</taxon>
        <taxon>Burkholderiales</taxon>
        <taxon>Comamonadaceae</taxon>
        <taxon>Rhodoferax</taxon>
    </lineage>
</organism>
<proteinExistence type="inferred from homology"/>